<accession>P0C8B8</accession>
<name>STX2_SCOAN</name>
<comment type="subcellular location">
    <subcellularLocation>
        <location evidence="1">Secreted</location>
    </subcellularLocation>
</comment>
<comment type="tissue specificity">
    <text evidence="3">Expressed by the venom gland.</text>
</comment>
<comment type="mass spectrometry" mass="4722.07" method="Electrospray" evidence="1"/>
<comment type="similarity">
    <text evidence="2">Belongs to the scolopendra toxin 2 family.</text>
</comment>
<feature type="chain" id="PRO_0000352854" description="Scolopendra 4722.07 Da toxin">
    <location>
        <begin position="1"/>
        <end position="15" status="greater than"/>
    </location>
</feature>
<feature type="non-terminal residue">
    <location>
        <position position="15"/>
    </location>
</feature>
<proteinExistence type="evidence at protein level"/>
<organism>
    <name type="scientific">Scolopendra angulata</name>
    <name type="common">Barbados giant red centipede</name>
    <dbReference type="NCBI Taxonomy" id="486498"/>
    <lineage>
        <taxon>Eukaryota</taxon>
        <taxon>Metazoa</taxon>
        <taxon>Ecdysozoa</taxon>
        <taxon>Arthropoda</taxon>
        <taxon>Myriapoda</taxon>
        <taxon>Chilopoda</taxon>
        <taxon>Pleurostigmophora</taxon>
        <taxon>Scolopendromorpha</taxon>
        <taxon>Scolopendridae</taxon>
        <taxon>Scolopendra</taxon>
    </lineage>
</organism>
<dbReference type="GO" id="GO:0005576">
    <property type="term" value="C:extracellular region"/>
    <property type="evidence" value="ECO:0007669"/>
    <property type="project" value="UniProtKB-SubCell"/>
</dbReference>
<dbReference type="GO" id="GO:0090729">
    <property type="term" value="F:toxin activity"/>
    <property type="evidence" value="ECO:0007669"/>
    <property type="project" value="UniProtKB-KW"/>
</dbReference>
<evidence type="ECO:0000269" key="1">
    <source>
    </source>
</evidence>
<evidence type="ECO:0000305" key="2"/>
<evidence type="ECO:0000305" key="3">
    <source>
    </source>
</evidence>
<reference key="1">
    <citation type="journal article" date="2007" name="Toxicon">
        <title>Venomic analyses of Scolopendra viridicornis nigra and Scolopendra angulata (Centipede, Scolopendromorpha): shedding light on venoms from a neglected group.</title>
        <authorList>
            <person name="Rates B."/>
            <person name="Bemquerer M.P."/>
            <person name="Richardson M."/>
            <person name="Borges M.H."/>
            <person name="Morales R.A.V."/>
            <person name="De Lima M.E."/>
            <person name="Pimenta A.M.C."/>
        </authorList>
    </citation>
    <scope>PROTEIN SEQUENCE</scope>
    <scope>MASS SPECTROMETRY</scope>
    <scope>SUBCELLULAR LOCATION</scope>
    <source>
        <tissue>Venom</tissue>
    </source>
</reference>
<sequence length="15" mass="1735">ALPSFSRADRYGXRQ</sequence>
<protein>
    <recommendedName>
        <fullName>Scolopendra 4722.07 Da toxin</fullName>
    </recommendedName>
</protein>
<keyword id="KW-0903">Direct protein sequencing</keyword>
<keyword id="KW-0528">Neurotoxin</keyword>
<keyword id="KW-0964">Secreted</keyword>
<keyword id="KW-0800">Toxin</keyword>